<sequence>MRDIGINGIKLPTEDCNDPECPFHGKLSVRGQILKGIVISDKMTKNIVMKRYREKWSYKYQRKQRVSSKIHAYSPPCMEAKIGDIITIAECRPLNKGSSFVVIENKSNINFVDNLLNVDDKWREELYVKDLKEMISLIQKEIKSLPSKSSELPIRLDQLANCQRNLYFISGDIKQLEDSVDNFSKSVSLTPINSSDKLIRLISLGKTQSFLYKTTNDVSSLDSAINAYGEAIETYNVLSTITNNYLPYFLTASKNLADLLIFEYEKNKNASDLKRAVYYYNEFLNSAPTGTSNTPIVLKRLSSAMKYYYTLNQDIDYLEKEINYIQKAVNITNSSSANLPGLLIDLGDSLNEYYECGKSKIPFDKLEKILIESRNSYMKAKGLISDDSINLLKIFNNIGNVSRELYIHTNEISYLKEAIDFWRKSIKSEDLNKQNYSSNNILRLNNLAVGLIDLYEVESDPKYLDESQKIWNRLKRELWTRKNYKS</sequence>
<comment type="function">
    <text evidence="1">One of the primary rRNA binding proteins, it binds specifically to the 5'-end of 16S ribosomal RNA.</text>
</comment>
<comment type="subunit">
    <text evidence="1">Part of the 30S ribosomal subunit.</text>
</comment>
<comment type="similarity">
    <text evidence="1">Belongs to the universal ribosomal protein uS17 family.</text>
</comment>
<evidence type="ECO:0000255" key="1">
    <source>
        <dbReference type="HAMAP-Rule" id="MF_01345"/>
    </source>
</evidence>
<evidence type="ECO:0000305" key="2"/>
<gene>
    <name evidence="1" type="primary">rps17-2</name>
    <name type="ordered locus">MA_2024</name>
</gene>
<keyword id="KW-1185">Reference proteome</keyword>
<keyword id="KW-0687">Ribonucleoprotein</keyword>
<keyword id="KW-0689">Ribosomal protein</keyword>
<keyword id="KW-0694">RNA-binding</keyword>
<keyword id="KW-0699">rRNA-binding</keyword>
<protein>
    <recommendedName>
        <fullName evidence="1">Small ribosomal subunit protein uS17B</fullName>
    </recommendedName>
    <alternativeName>
        <fullName evidence="2">30S ribosomal protein S17 2</fullName>
    </alternativeName>
</protein>
<proteinExistence type="inferred from homology"/>
<organism>
    <name type="scientific">Methanosarcina acetivorans (strain ATCC 35395 / DSM 2834 / JCM 12185 / C2A)</name>
    <dbReference type="NCBI Taxonomy" id="188937"/>
    <lineage>
        <taxon>Archaea</taxon>
        <taxon>Methanobacteriati</taxon>
        <taxon>Methanobacteriota</taxon>
        <taxon>Stenosarchaea group</taxon>
        <taxon>Methanomicrobia</taxon>
        <taxon>Methanosarcinales</taxon>
        <taxon>Methanosarcinaceae</taxon>
        <taxon>Methanosarcina</taxon>
    </lineage>
</organism>
<accession>Q8TP90</accession>
<name>RS172_METAC</name>
<reference key="1">
    <citation type="journal article" date="2002" name="Genome Res.">
        <title>The genome of Methanosarcina acetivorans reveals extensive metabolic and physiological diversity.</title>
        <authorList>
            <person name="Galagan J.E."/>
            <person name="Nusbaum C."/>
            <person name="Roy A."/>
            <person name="Endrizzi M.G."/>
            <person name="Macdonald P."/>
            <person name="FitzHugh W."/>
            <person name="Calvo S."/>
            <person name="Engels R."/>
            <person name="Smirnov S."/>
            <person name="Atnoor D."/>
            <person name="Brown A."/>
            <person name="Allen N."/>
            <person name="Naylor J."/>
            <person name="Stange-Thomann N."/>
            <person name="DeArellano K."/>
            <person name="Johnson R."/>
            <person name="Linton L."/>
            <person name="McEwan P."/>
            <person name="McKernan K."/>
            <person name="Talamas J."/>
            <person name="Tirrell A."/>
            <person name="Ye W."/>
            <person name="Zimmer A."/>
            <person name="Barber R.D."/>
            <person name="Cann I."/>
            <person name="Graham D.E."/>
            <person name="Grahame D.A."/>
            <person name="Guss A.M."/>
            <person name="Hedderich R."/>
            <person name="Ingram-Smith C."/>
            <person name="Kuettner H.C."/>
            <person name="Krzycki J.A."/>
            <person name="Leigh J.A."/>
            <person name="Li W."/>
            <person name="Liu J."/>
            <person name="Mukhopadhyay B."/>
            <person name="Reeve J.N."/>
            <person name="Smith K."/>
            <person name="Springer T.A."/>
            <person name="Umayam L.A."/>
            <person name="White O."/>
            <person name="White R.H."/>
            <person name="de Macario E.C."/>
            <person name="Ferry J.G."/>
            <person name="Jarrell K.F."/>
            <person name="Jing H."/>
            <person name="Macario A.J.L."/>
            <person name="Paulsen I.T."/>
            <person name="Pritchett M."/>
            <person name="Sowers K.R."/>
            <person name="Swanson R.V."/>
            <person name="Zinder S.H."/>
            <person name="Lander E."/>
            <person name="Metcalf W.W."/>
            <person name="Birren B."/>
        </authorList>
    </citation>
    <scope>NUCLEOTIDE SEQUENCE [LARGE SCALE GENOMIC DNA]</scope>
    <source>
        <strain>ATCC 35395 / DSM 2834 / JCM 12185 / C2A</strain>
    </source>
</reference>
<feature type="chain" id="PRO_0000255711" description="Small ribosomal subunit protein uS17B">
    <location>
        <begin position="1"/>
        <end position="486"/>
    </location>
</feature>
<feature type="region of interest" description="30S ribosomal protein S17">
    <location>
        <begin position="1"/>
        <end position="112"/>
    </location>
</feature>
<feature type="region of interest" description="Unknown">
    <location>
        <begin position="113"/>
        <end position="486"/>
    </location>
</feature>
<dbReference type="EMBL" id="AE010299">
    <property type="protein sequence ID" value="AAM05427.1"/>
    <property type="molecule type" value="Genomic_DNA"/>
</dbReference>
<dbReference type="STRING" id="188937.MA_2024"/>
<dbReference type="EnsemblBacteria" id="AAM05427">
    <property type="protein sequence ID" value="AAM05427"/>
    <property type="gene ID" value="MA_2024"/>
</dbReference>
<dbReference type="KEGG" id="mac:MA_2024"/>
<dbReference type="HOGENOM" id="CLU_560968_0_0_2"/>
<dbReference type="InParanoid" id="Q8TP90"/>
<dbReference type="OrthoDB" id="10698at2157"/>
<dbReference type="PhylomeDB" id="Q8TP90"/>
<dbReference type="Proteomes" id="UP000002487">
    <property type="component" value="Chromosome"/>
</dbReference>
<dbReference type="GO" id="GO:0022627">
    <property type="term" value="C:cytosolic small ribosomal subunit"/>
    <property type="evidence" value="ECO:0000318"/>
    <property type="project" value="GO_Central"/>
</dbReference>
<dbReference type="GO" id="GO:0019843">
    <property type="term" value="F:rRNA binding"/>
    <property type="evidence" value="ECO:0007669"/>
    <property type="project" value="UniProtKB-UniRule"/>
</dbReference>
<dbReference type="GO" id="GO:0003735">
    <property type="term" value="F:structural constituent of ribosome"/>
    <property type="evidence" value="ECO:0000318"/>
    <property type="project" value="GO_Central"/>
</dbReference>
<dbReference type="GO" id="GO:0006412">
    <property type="term" value="P:translation"/>
    <property type="evidence" value="ECO:0007669"/>
    <property type="project" value="UniProtKB-UniRule"/>
</dbReference>
<dbReference type="CDD" id="cd00364">
    <property type="entry name" value="Ribosomal_uS17"/>
    <property type="match status" value="1"/>
</dbReference>
<dbReference type="FunFam" id="2.40.50.1000:FF:000005">
    <property type="entry name" value="30S ribosomal protein S17"/>
    <property type="match status" value="1"/>
</dbReference>
<dbReference type="Gene3D" id="2.40.50.1000">
    <property type="match status" value="1"/>
</dbReference>
<dbReference type="HAMAP" id="MF_01345_A">
    <property type="entry name" value="Ribosomal_uS17_A"/>
    <property type="match status" value="1"/>
</dbReference>
<dbReference type="InterPro" id="IPR012340">
    <property type="entry name" value="NA-bd_OB-fold"/>
</dbReference>
<dbReference type="InterPro" id="IPR000266">
    <property type="entry name" value="Ribosomal_uS17"/>
</dbReference>
<dbReference type="InterPro" id="IPR028333">
    <property type="entry name" value="Ribosomal_uS17_arc/euk"/>
</dbReference>
<dbReference type="InterPro" id="IPR019978">
    <property type="entry name" value="Ribosomal_uS17_archaeal"/>
</dbReference>
<dbReference type="NCBIfam" id="NF006345">
    <property type="entry name" value="PRK08572.1"/>
    <property type="match status" value="1"/>
</dbReference>
<dbReference type="NCBIfam" id="TIGR03630">
    <property type="entry name" value="uS17_arch"/>
    <property type="match status" value="1"/>
</dbReference>
<dbReference type="PANTHER" id="PTHR10744">
    <property type="entry name" value="40S RIBOSOMAL PROTEIN S11 FAMILY MEMBER"/>
    <property type="match status" value="1"/>
</dbReference>
<dbReference type="PANTHER" id="PTHR10744:SF9">
    <property type="entry name" value="40S RIBOSOMAL PROTEIN S11-RELATED"/>
    <property type="match status" value="1"/>
</dbReference>
<dbReference type="Pfam" id="PF00366">
    <property type="entry name" value="Ribosomal_S17"/>
    <property type="match status" value="1"/>
</dbReference>
<dbReference type="SUPFAM" id="SSF50249">
    <property type="entry name" value="Nucleic acid-binding proteins"/>
    <property type="match status" value="1"/>
</dbReference>